<sequence>MSSNANSQHSTLAKFAFNIYGSLNHATPSYEGSASPSSSYSSSRSKTNEPYNYRFNKLVYNCEREVTTLSQLNYPLSLSNTFQSDQNLSHHVIIGGRNYLKLLALNEDQSRIVQDINVLDQSSIYTHNSRVPSTNKLNNINTVKAQSDTIGCGLSNGLITVYKVGSNGKCRLIHKFSDHKRCINSLDYVGIRNLYDAPTQMISGSQDGSIKLWDMRSSSPRPMLTISSGSHSDPIRSCQYSPHSQGRNKLVVLSVHDSGALCKFDLRLSNGHGPERKWNIHTGPALSLHIHPEKEYVVTGGRDQKICVFNYGDSQISNRITPDEMINTYGPVMKVRWCLYPDASTSQFGEPLDTFQQSNDFNSSSLYSYDLACSYLNDDSTVAIYNLNRKFIPKEVITTSSNKPIQNFIWANNPGSSRKIWTITKSNVFSSYDLDMHDSLLESEISKPLDELANVTVDWNNGFGDLCLANQEKYEFEITEVESQASDNDMGDIDTEYSSRYERSNSNSVIDESSLIGSSSAEKPPLFRSSTHYSMHMAKSPSPVPRRGSTSFAAHSESQPNLSNMQGLSMSRPKLTRNLSQATEDSSISIGSAPQSNIHLKSKRSFQVSYASPYLVPVSLPLSLNDENVFEILSNNYLISIPDGFTLVDVCLLNASVAASVQRFRECQIWRVLAVSLEEDYVQIDNTTFLSDPELEHNETNQDEKIDDQKDAKSISSDLGNFVGSYNSNSTSTTNYGGLGSLSAKDTTKANNSNNLMDMINRSRVNSMNHLQSISPSGSHTFIRNAIHENKSNENAIVDDDETDAAVHGTEGRIGTSHVSEDLDNENLNILNNAVLNSSPNSAMTTPHPQSNSPNYSNFFSLPKLSSTFMSPIYDEFAEKQEQPRSLKAESLLNNDVSDRTTTKSELTKAIKEEVDNSSGAPLKKAWKSSSLLEKALAHASNEGDIILCSTLSLLFYDSFKQVIPQSSCLDWLGLYIEILQRKRLFVNAIHVVNNAPDDVRSKLKNLTSGDVDLRFFCCWCQKLLVNEKSKEKLKNDVNADFGYWYCDECSQKQSNCIYCNEPCKGLTVVVSLKCGHRGHFGCLREWFIEDENNECPGGCDYSVV</sequence>
<evidence type="ECO:0000250" key="1"/>
<evidence type="ECO:0000255" key="2">
    <source>
        <dbReference type="PROSITE-ProRule" id="PRU00175"/>
    </source>
</evidence>
<evidence type="ECO:0000256" key="3">
    <source>
        <dbReference type="SAM" id="MobiDB-lite"/>
    </source>
</evidence>
<evidence type="ECO:0000305" key="4"/>
<reference key="1">
    <citation type="journal article" date="2007" name="Nat. Biotechnol.">
        <title>Genome sequence of the lignocellulose-bioconverting and xylose-fermenting yeast Pichia stipitis.</title>
        <authorList>
            <person name="Jeffries T.W."/>
            <person name="Grigoriev I.V."/>
            <person name="Grimwood J."/>
            <person name="Laplaza J.M."/>
            <person name="Aerts A."/>
            <person name="Salamov A."/>
            <person name="Schmutz J."/>
            <person name="Lindquist E."/>
            <person name="Dehal P."/>
            <person name="Shapiro H."/>
            <person name="Jin Y.-S."/>
            <person name="Passoth V."/>
            <person name="Richardson P.M."/>
        </authorList>
    </citation>
    <scope>NUCLEOTIDE SEQUENCE [LARGE SCALE GENOMIC DNA]</scope>
    <source>
        <strain>ATCC 58785 / CBS 6054 / NBRC 10063 / NRRL Y-11545</strain>
    </source>
</reference>
<name>RTC1_PICST</name>
<gene>
    <name type="primary">RTC1</name>
    <name type="ORF">PICST_53206</name>
</gene>
<organism>
    <name type="scientific">Scheffersomyces stipitis (strain ATCC 58785 / CBS 6054 / NBRC 10063 / NRRL Y-11545)</name>
    <name type="common">Yeast</name>
    <name type="synonym">Pichia stipitis</name>
    <dbReference type="NCBI Taxonomy" id="322104"/>
    <lineage>
        <taxon>Eukaryota</taxon>
        <taxon>Fungi</taxon>
        <taxon>Dikarya</taxon>
        <taxon>Ascomycota</taxon>
        <taxon>Saccharomycotina</taxon>
        <taxon>Pichiomycetes</taxon>
        <taxon>Debaryomycetaceae</taxon>
        <taxon>Scheffersomyces</taxon>
    </lineage>
</organism>
<proteinExistence type="inferred from homology"/>
<accession>A3GIA4</accession>
<feature type="chain" id="PRO_0000408787" description="Restriction of telomere capping protein 1">
    <location>
        <begin position="1"/>
        <end position="1105"/>
    </location>
</feature>
<feature type="repeat" description="WD 1">
    <location>
        <begin position="135"/>
        <end position="172"/>
    </location>
</feature>
<feature type="repeat" description="WD 2">
    <location>
        <begin position="178"/>
        <end position="223"/>
    </location>
</feature>
<feature type="repeat" description="WD 3">
    <location>
        <begin position="230"/>
        <end position="274"/>
    </location>
</feature>
<feature type="repeat" description="WD 4">
    <location>
        <begin position="280"/>
        <end position="319"/>
    </location>
</feature>
<feature type="repeat" description="WD 5">
    <location>
        <begin position="377"/>
        <end position="420"/>
    </location>
</feature>
<feature type="repeat" description="WD 6">
    <location>
        <begin position="560"/>
        <end position="601"/>
    </location>
</feature>
<feature type="repeat" description="WD 7">
    <location>
        <begin position="917"/>
        <end position="959"/>
    </location>
</feature>
<feature type="zinc finger region" description="RING-type; degenerate" evidence="2">
    <location>
        <begin position="1057"/>
        <end position="1100"/>
    </location>
</feature>
<feature type="region of interest" description="Disordered" evidence="3">
    <location>
        <begin position="481"/>
        <end position="523"/>
    </location>
</feature>
<feature type="region of interest" description="Disordered" evidence="3">
    <location>
        <begin position="535"/>
        <end position="590"/>
    </location>
</feature>
<feature type="region of interest" description="Disordered" evidence="3">
    <location>
        <begin position="692"/>
        <end position="711"/>
    </location>
</feature>
<feature type="region of interest" description="Disordered" evidence="3">
    <location>
        <begin position="734"/>
        <end position="754"/>
    </location>
</feature>
<feature type="compositionally biased region" description="Polar residues" evidence="3">
    <location>
        <begin position="509"/>
        <end position="521"/>
    </location>
</feature>
<feature type="compositionally biased region" description="Polar residues" evidence="3">
    <location>
        <begin position="548"/>
        <end position="569"/>
    </location>
</feature>
<feature type="compositionally biased region" description="Polar residues" evidence="3">
    <location>
        <begin position="577"/>
        <end position="590"/>
    </location>
</feature>
<feature type="compositionally biased region" description="Basic and acidic residues" evidence="3">
    <location>
        <begin position="694"/>
        <end position="711"/>
    </location>
</feature>
<comment type="function">
    <text evidence="1">May be involved in a process influencing telomere capping.</text>
</comment>
<comment type="subcellular location">
    <subcellularLocation>
        <location evidence="1">Vacuole</location>
    </subcellularLocation>
</comment>
<comment type="similarity">
    <text evidence="4">Belongs to the WD repeat RTC1 family.</text>
</comment>
<keyword id="KW-0479">Metal-binding</keyword>
<keyword id="KW-1185">Reference proteome</keyword>
<keyword id="KW-0677">Repeat</keyword>
<keyword id="KW-0926">Vacuole</keyword>
<keyword id="KW-0853">WD repeat</keyword>
<keyword id="KW-0862">Zinc</keyword>
<keyword id="KW-0863">Zinc-finger</keyword>
<dbReference type="EMBL" id="AAVQ01000002">
    <property type="protein sequence ID" value="EAZ63199.2"/>
    <property type="molecule type" value="Genomic_DNA"/>
</dbReference>
<dbReference type="RefSeq" id="XP_001387222.2">
    <property type="nucleotide sequence ID" value="XM_001387185.1"/>
</dbReference>
<dbReference type="SMR" id="A3GIA4"/>
<dbReference type="FunCoup" id="A3GIA4">
    <property type="interactions" value="127"/>
</dbReference>
<dbReference type="STRING" id="322104.A3GIA4"/>
<dbReference type="GeneID" id="4852003"/>
<dbReference type="KEGG" id="pic:PICST_53206"/>
<dbReference type="eggNOG" id="KOG0269">
    <property type="taxonomic scope" value="Eukaryota"/>
</dbReference>
<dbReference type="HOGENOM" id="CLU_008512_0_0_1"/>
<dbReference type="InParanoid" id="A3GIA4"/>
<dbReference type="OMA" id="GRDGKCC"/>
<dbReference type="OrthoDB" id="60955at2759"/>
<dbReference type="Proteomes" id="UP000002258">
    <property type="component" value="Chromosome 1"/>
</dbReference>
<dbReference type="GO" id="GO:0005829">
    <property type="term" value="C:cytosol"/>
    <property type="evidence" value="ECO:0007669"/>
    <property type="project" value="TreeGrafter"/>
</dbReference>
<dbReference type="GO" id="GO:0061700">
    <property type="term" value="C:GATOR2 complex"/>
    <property type="evidence" value="ECO:0007669"/>
    <property type="project" value="TreeGrafter"/>
</dbReference>
<dbReference type="GO" id="GO:0005774">
    <property type="term" value="C:vacuolar membrane"/>
    <property type="evidence" value="ECO:0007669"/>
    <property type="project" value="TreeGrafter"/>
</dbReference>
<dbReference type="GO" id="GO:0008270">
    <property type="term" value="F:zinc ion binding"/>
    <property type="evidence" value="ECO:0007669"/>
    <property type="project" value="UniProtKB-KW"/>
</dbReference>
<dbReference type="GO" id="GO:0016239">
    <property type="term" value="P:positive regulation of macroautophagy"/>
    <property type="evidence" value="ECO:0007669"/>
    <property type="project" value="TreeGrafter"/>
</dbReference>
<dbReference type="GO" id="GO:1904263">
    <property type="term" value="P:positive regulation of TORC1 signaling"/>
    <property type="evidence" value="ECO:0007669"/>
    <property type="project" value="TreeGrafter"/>
</dbReference>
<dbReference type="CDD" id="cd16488">
    <property type="entry name" value="mRING-H2-C3H3C2_Mio-like"/>
    <property type="match status" value="1"/>
</dbReference>
<dbReference type="Gene3D" id="2.130.10.10">
    <property type="entry name" value="YVTN repeat-like/Quinoprotein amine dehydrogenase"/>
    <property type="match status" value="1"/>
</dbReference>
<dbReference type="Gene3D" id="3.30.40.10">
    <property type="entry name" value="Zinc/RING finger domain, C3HC4 (zinc finger)"/>
    <property type="match status" value="1"/>
</dbReference>
<dbReference type="InterPro" id="IPR015943">
    <property type="entry name" value="WD40/YVTN_repeat-like_dom_sf"/>
</dbReference>
<dbReference type="InterPro" id="IPR019775">
    <property type="entry name" value="WD40_repeat_CS"/>
</dbReference>
<dbReference type="InterPro" id="IPR036322">
    <property type="entry name" value="WD40_repeat_dom_sf"/>
</dbReference>
<dbReference type="InterPro" id="IPR001680">
    <property type="entry name" value="WD40_rpt"/>
</dbReference>
<dbReference type="InterPro" id="IPR037590">
    <property type="entry name" value="WDR24"/>
</dbReference>
<dbReference type="InterPro" id="IPR049566">
    <property type="entry name" value="WDR59_RTC1-like_RING_Znf"/>
</dbReference>
<dbReference type="InterPro" id="IPR001841">
    <property type="entry name" value="Znf_RING"/>
</dbReference>
<dbReference type="InterPro" id="IPR013083">
    <property type="entry name" value="Znf_RING/FYVE/PHD"/>
</dbReference>
<dbReference type="PANTHER" id="PTHR46200">
    <property type="entry name" value="GATOR COMPLEX PROTEIN WDR24"/>
    <property type="match status" value="1"/>
</dbReference>
<dbReference type="PANTHER" id="PTHR46200:SF1">
    <property type="entry name" value="GATOR COMPLEX PROTEIN WDR24"/>
    <property type="match status" value="1"/>
</dbReference>
<dbReference type="Pfam" id="PF00400">
    <property type="entry name" value="WD40"/>
    <property type="match status" value="2"/>
</dbReference>
<dbReference type="Pfam" id="PF17120">
    <property type="entry name" value="zf-RING_16"/>
    <property type="match status" value="1"/>
</dbReference>
<dbReference type="SMART" id="SM00320">
    <property type="entry name" value="WD40"/>
    <property type="match status" value="3"/>
</dbReference>
<dbReference type="SUPFAM" id="SSF50978">
    <property type="entry name" value="WD40 repeat-like"/>
    <property type="match status" value="1"/>
</dbReference>
<dbReference type="PROSITE" id="PS00678">
    <property type="entry name" value="WD_REPEATS_1"/>
    <property type="match status" value="1"/>
</dbReference>
<dbReference type="PROSITE" id="PS50082">
    <property type="entry name" value="WD_REPEATS_2"/>
    <property type="match status" value="1"/>
</dbReference>
<dbReference type="PROSITE" id="PS50294">
    <property type="entry name" value="WD_REPEATS_REGION"/>
    <property type="match status" value="1"/>
</dbReference>
<dbReference type="PROSITE" id="PS50089">
    <property type="entry name" value="ZF_RING_2"/>
    <property type="match status" value="1"/>
</dbReference>
<protein>
    <recommendedName>
        <fullName>Restriction of telomere capping protein 1</fullName>
    </recommendedName>
</protein>